<proteinExistence type="predicted"/>
<dbReference type="EMBL" id="X14835">
    <property type="protein sequence ID" value="CAA32945.1"/>
    <property type="molecule type" value="Genomic_DNA"/>
</dbReference>
<dbReference type="PIR" id="S08245">
    <property type="entry name" value="S08245"/>
</dbReference>
<dbReference type="SMR" id="P15890"/>
<dbReference type="GO" id="GO:0003676">
    <property type="term" value="F:nucleic acid binding"/>
    <property type="evidence" value="ECO:0007669"/>
    <property type="project" value="InterPro"/>
</dbReference>
<dbReference type="Gene3D" id="2.40.50.140">
    <property type="entry name" value="Nucleic acid-binding proteins"/>
    <property type="match status" value="1"/>
</dbReference>
<dbReference type="InterPro" id="IPR012340">
    <property type="entry name" value="NA-bd_OB-fold"/>
</dbReference>
<dbReference type="InterPro" id="IPR004365">
    <property type="entry name" value="NA-bd_OB_tRNA"/>
</dbReference>
<dbReference type="Pfam" id="PF01336">
    <property type="entry name" value="tRNA_anti-codon"/>
    <property type="match status" value="1"/>
</dbReference>
<dbReference type="SUPFAM" id="SSF50249">
    <property type="entry name" value="Nucleic acid-binding proteins"/>
    <property type="match status" value="1"/>
</dbReference>
<reference key="1">
    <citation type="journal article" date="1990" name="Syst. Appl. Microbiol.">
        <title>Sequence, organisation and transcription of the ribosomal RNA operon and the downstream tRNA and protein genes in the archaebacterium Thermofilum pendens.</title>
        <authorList>
            <person name="Kjems J."/>
            <person name="Leffers H."/>
            <person name="Olesen T."/>
            <person name="Ingelore H."/>
            <person name="Garrett R.A."/>
        </authorList>
    </citation>
    <scope>NUCLEOTIDE SEQUENCE [GENOMIC DNA]</scope>
    <source>
        <strain>HVV3 / DSM 2475</strain>
    </source>
</reference>
<sequence length="171" mass="18773">MGEGREGYEILLDCFLKALPSEVVAGAVKRGSVVYFRVVHGKAVLMSRKIAVVGRVQGVVHGDKFTDIVLGDGNGTVTVRFWSEKKGLLEDKGLAEGSTAKVLGVLRESREGTVYVTPIAVQSVPDGYLEEFTARIREDRDFLATFIEKQRSTVDAEEAKPPIGRDFSEKR</sequence>
<name>YR18_THEPE</name>
<organism>
    <name type="scientific">Thermofilum pendens</name>
    <dbReference type="NCBI Taxonomy" id="2269"/>
    <lineage>
        <taxon>Archaea</taxon>
        <taxon>Thermoproteota</taxon>
        <taxon>Thermoprotei</taxon>
        <taxon>Thermofilales</taxon>
        <taxon>Thermofilaceae</taxon>
        <taxon>Thermofilum</taxon>
    </lineage>
</organism>
<protein>
    <recommendedName>
        <fullName>Uncharacterized 18.7 kDa protein in ribosomal RNA operon</fullName>
    </recommendedName>
</protein>
<accession>P15890</accession>
<feature type="chain" id="PRO_0000066448" description="Uncharacterized 18.7 kDa protein in ribosomal RNA operon">
    <location>
        <begin position="1"/>
        <end position="171"/>
    </location>
</feature>